<reference key="1">
    <citation type="journal article" date="2011" name="J. Bacteriol.">
        <title>Comparative genomics of 28 Salmonella enterica isolates: evidence for CRISPR-mediated adaptive sublineage evolution.</title>
        <authorList>
            <person name="Fricke W.F."/>
            <person name="Mammel M.K."/>
            <person name="McDermott P.F."/>
            <person name="Tartera C."/>
            <person name="White D.G."/>
            <person name="Leclerc J.E."/>
            <person name="Ravel J."/>
            <person name="Cebula T.A."/>
        </authorList>
    </citation>
    <scope>NUCLEOTIDE SEQUENCE [LARGE SCALE GENOMIC DNA]</scope>
    <source>
        <strain>CVM19633</strain>
    </source>
</reference>
<protein>
    <recommendedName>
        <fullName evidence="1">Uncharacterized Nudix hydrolase NudL</fullName>
        <ecNumber evidence="1">3.6.1.-</ecNumber>
    </recommendedName>
</protein>
<gene>
    <name evidence="1" type="primary">nudL</name>
    <name type="ordered locus">SeSA_A1969</name>
</gene>
<keyword id="KW-0378">Hydrolase</keyword>
<keyword id="KW-0460">Magnesium</keyword>
<keyword id="KW-0464">Manganese</keyword>
<keyword id="KW-0479">Metal-binding</keyword>
<organism>
    <name type="scientific">Salmonella schwarzengrund (strain CVM19633)</name>
    <dbReference type="NCBI Taxonomy" id="439843"/>
    <lineage>
        <taxon>Bacteria</taxon>
        <taxon>Pseudomonadati</taxon>
        <taxon>Pseudomonadota</taxon>
        <taxon>Gammaproteobacteria</taxon>
        <taxon>Enterobacterales</taxon>
        <taxon>Enterobacteriaceae</taxon>
        <taxon>Salmonella</taxon>
    </lineage>
</organism>
<comment type="function">
    <text evidence="1">Probably mediates the hydrolysis of some nucleoside diphosphate derivatives.</text>
</comment>
<comment type="cofactor">
    <cofactor evidence="1">
        <name>Mn(2+)</name>
        <dbReference type="ChEBI" id="CHEBI:29035"/>
    </cofactor>
    <cofactor evidence="1">
        <name>Mg(2+)</name>
        <dbReference type="ChEBI" id="CHEBI:18420"/>
    </cofactor>
</comment>
<comment type="similarity">
    <text evidence="1">Belongs to the Nudix hydrolase family. PCD1 subfamily.</text>
</comment>
<proteinExistence type="inferred from homology"/>
<name>NUDL_SALSV</name>
<feature type="chain" id="PRO_1000147827" description="Uncharacterized Nudix hydrolase NudL">
    <location>
        <begin position="1"/>
        <end position="192"/>
    </location>
</feature>
<feature type="domain" description="Nudix hydrolase" evidence="1">
    <location>
        <begin position="29"/>
        <end position="160"/>
    </location>
</feature>
<feature type="short sequence motif" description="Nudix box">
    <location>
        <begin position="67"/>
        <end position="89"/>
    </location>
</feature>
<feature type="binding site" evidence="1">
    <location>
        <position position="83"/>
    </location>
    <ligand>
        <name>Mg(2+)</name>
        <dbReference type="ChEBI" id="CHEBI:18420"/>
    </ligand>
</feature>
<feature type="binding site" evidence="1">
    <location>
        <position position="87"/>
    </location>
    <ligand>
        <name>Mg(2+)</name>
        <dbReference type="ChEBI" id="CHEBI:18420"/>
    </ligand>
</feature>
<accession>B4TXZ6</accession>
<evidence type="ECO:0000255" key="1">
    <source>
        <dbReference type="HAMAP-Rule" id="MF_01592"/>
    </source>
</evidence>
<sequence>MDTSRLTLDHFLSRFQLLRPQMTHETLNQRQAAVLIPVVRRPQPGLLLTQRAIHLRKHAGQVAFPGGAVDSTDASLIAAALREAQEEVAIPPQAVEVIGVLPPVDSVTGFQVTPVVGIIPPNLPWRASEDEVSAVFEMPLAQALQLGRYHPLDVYRRGNSHRVWLSWYEHYFVWGMTANILRELALQIGVKP</sequence>
<dbReference type="EC" id="3.6.1.-" evidence="1"/>
<dbReference type="EMBL" id="CP001127">
    <property type="protein sequence ID" value="ACF91756.1"/>
    <property type="molecule type" value="Genomic_DNA"/>
</dbReference>
<dbReference type="RefSeq" id="WP_000381544.1">
    <property type="nucleotide sequence ID" value="NC_011094.1"/>
</dbReference>
<dbReference type="SMR" id="B4TXZ6"/>
<dbReference type="KEGG" id="sew:SeSA_A1969"/>
<dbReference type="HOGENOM" id="CLU_040940_5_2_6"/>
<dbReference type="Proteomes" id="UP000001865">
    <property type="component" value="Chromosome"/>
</dbReference>
<dbReference type="GO" id="GO:0010945">
    <property type="term" value="F:coenzyme A diphosphatase activity"/>
    <property type="evidence" value="ECO:0007669"/>
    <property type="project" value="InterPro"/>
</dbReference>
<dbReference type="GO" id="GO:0000287">
    <property type="term" value="F:magnesium ion binding"/>
    <property type="evidence" value="ECO:0007669"/>
    <property type="project" value="UniProtKB-UniRule"/>
</dbReference>
<dbReference type="GO" id="GO:0030145">
    <property type="term" value="F:manganese ion binding"/>
    <property type="evidence" value="ECO:0007669"/>
    <property type="project" value="UniProtKB-UniRule"/>
</dbReference>
<dbReference type="GO" id="GO:0009132">
    <property type="term" value="P:nucleoside diphosphate metabolic process"/>
    <property type="evidence" value="ECO:0007669"/>
    <property type="project" value="InterPro"/>
</dbReference>
<dbReference type="CDD" id="cd03426">
    <property type="entry name" value="NUDIX_CoAse_Nudt7"/>
    <property type="match status" value="1"/>
</dbReference>
<dbReference type="Gene3D" id="3.90.79.10">
    <property type="entry name" value="Nucleoside Triphosphate Pyrophosphohydrolase"/>
    <property type="match status" value="1"/>
</dbReference>
<dbReference type="HAMAP" id="MF_01592">
    <property type="entry name" value="Nudix_NudL"/>
    <property type="match status" value="1"/>
</dbReference>
<dbReference type="InterPro" id="IPR045121">
    <property type="entry name" value="CoAse"/>
</dbReference>
<dbReference type="InterPro" id="IPR015797">
    <property type="entry name" value="NUDIX_hydrolase-like_dom_sf"/>
</dbReference>
<dbReference type="InterPro" id="IPR000086">
    <property type="entry name" value="NUDIX_hydrolase_dom"/>
</dbReference>
<dbReference type="InterPro" id="IPR000059">
    <property type="entry name" value="NUDIX_hydrolase_NudL_CS"/>
</dbReference>
<dbReference type="InterPro" id="IPR023735">
    <property type="entry name" value="Nudix_NudL"/>
</dbReference>
<dbReference type="NCBIfam" id="NF007980">
    <property type="entry name" value="PRK10707.1"/>
    <property type="match status" value="1"/>
</dbReference>
<dbReference type="PANTHER" id="PTHR12992:SF11">
    <property type="entry name" value="MITOCHONDRIAL COENZYME A DIPHOSPHATASE NUDT8"/>
    <property type="match status" value="1"/>
</dbReference>
<dbReference type="PANTHER" id="PTHR12992">
    <property type="entry name" value="NUDIX HYDROLASE"/>
    <property type="match status" value="1"/>
</dbReference>
<dbReference type="Pfam" id="PF00293">
    <property type="entry name" value="NUDIX"/>
    <property type="match status" value="1"/>
</dbReference>
<dbReference type="SUPFAM" id="SSF55811">
    <property type="entry name" value="Nudix"/>
    <property type="match status" value="1"/>
</dbReference>
<dbReference type="PROSITE" id="PS51462">
    <property type="entry name" value="NUDIX"/>
    <property type="match status" value="1"/>
</dbReference>
<dbReference type="PROSITE" id="PS01293">
    <property type="entry name" value="NUDIX_COA"/>
    <property type="match status" value="1"/>
</dbReference>